<reference key="1">
    <citation type="journal article" date="2009" name="Proc. Natl. Acad. Sci. U.S.A.">
        <title>Hamiltonella defensa, genome evolution of protective bacterial endosymbiont from pathogenic ancestors.</title>
        <authorList>
            <person name="Degnan P.H."/>
            <person name="Yu Y."/>
            <person name="Sisneros N."/>
            <person name="Wing R.A."/>
            <person name="Moran N.A."/>
        </authorList>
    </citation>
    <scope>NUCLEOTIDE SEQUENCE [LARGE SCALE GENOMIC DNA]</scope>
    <source>
        <strain>5AT</strain>
    </source>
</reference>
<feature type="chain" id="PRO_1000203908" description="Threonine--tRNA ligase">
    <location>
        <begin position="1"/>
        <end position="638"/>
    </location>
</feature>
<feature type="domain" description="TGS" evidence="2">
    <location>
        <begin position="1"/>
        <end position="61"/>
    </location>
</feature>
<feature type="region of interest" description="Catalytic" evidence="1">
    <location>
        <begin position="243"/>
        <end position="534"/>
    </location>
</feature>
<feature type="binding site" evidence="1">
    <location>
        <position position="334"/>
    </location>
    <ligand>
        <name>Zn(2+)</name>
        <dbReference type="ChEBI" id="CHEBI:29105"/>
    </ligand>
</feature>
<feature type="binding site" evidence="1">
    <location>
        <position position="385"/>
    </location>
    <ligand>
        <name>Zn(2+)</name>
        <dbReference type="ChEBI" id="CHEBI:29105"/>
    </ligand>
</feature>
<feature type="binding site" evidence="1">
    <location>
        <position position="511"/>
    </location>
    <ligand>
        <name>Zn(2+)</name>
        <dbReference type="ChEBI" id="CHEBI:29105"/>
    </ligand>
</feature>
<protein>
    <recommendedName>
        <fullName evidence="1">Threonine--tRNA ligase</fullName>
        <ecNumber evidence="1">6.1.1.3</ecNumber>
    </recommendedName>
    <alternativeName>
        <fullName evidence="1">Threonyl-tRNA synthetase</fullName>
        <shortName evidence="1">ThrRS</shortName>
    </alternativeName>
</protein>
<gene>
    <name evidence="1" type="primary">thrS</name>
    <name type="ordered locus">HDEF_1824</name>
</gene>
<organism>
    <name type="scientific">Hamiltonella defensa subsp. Acyrthosiphon pisum (strain 5AT)</name>
    <dbReference type="NCBI Taxonomy" id="572265"/>
    <lineage>
        <taxon>Bacteria</taxon>
        <taxon>Pseudomonadati</taxon>
        <taxon>Pseudomonadota</taxon>
        <taxon>Gammaproteobacteria</taxon>
        <taxon>Enterobacterales</taxon>
        <taxon>Enterobacteriaceae</taxon>
        <taxon>aphid secondary symbionts</taxon>
        <taxon>Candidatus Hamiltonella</taxon>
    </lineage>
</organism>
<evidence type="ECO:0000255" key="1">
    <source>
        <dbReference type="HAMAP-Rule" id="MF_00184"/>
    </source>
</evidence>
<evidence type="ECO:0000255" key="2">
    <source>
        <dbReference type="PROSITE-ProRule" id="PRU01228"/>
    </source>
</evidence>
<sequence length="638" mass="73926">MPVITLPDGSTRHYEQSLSVLDVALDIHPRLAKSCIAGRFNDQLIDACDLLSVDGKLQIITPSDGEAVEIIRHSCAHLLGHAVKQLWPETKMAIGPVIENGFYYDLDIESPLTQEDLELLEKRMHELAHKNYTVIKKKVSWQKARDTFSKRGESYKIAILDENIDSSDQPNLYFHEEYIDMCRGPHVPNMSFCHYFKLQKTSGAYWRGDSKNKTLQRVYGTAWSDKKQLDAYLNRLEEATKRDHRKIGKTQDLYHFQEEAPGMVFWHENGWIVFRELEILIREKLKEYEYQEVKGPFMMDRVLWEKTGHWENYSENMFTTLSENREYCIKPMNCPGHLEIFKQGLKSYRDLPLRMAEFGSCHRNEPSGALHGLMRVRGFTQDDAHIFCTEKQVRKEVSNCIKMTYDIYQTFGFKKIAVKLSTRPEKRIGSDEIWTQAEEDLASVLKEQGITFELQPGEGAFYGPKIEFTLYDCLDRAWQCGTVQLDFSLPVRLNAFYIDENSERQVPVMIHRAILGSIERFIGILTEEYAGFFPVWLAPVQVMLINITEKQSDYVKKVAKNLQQLGVRAKVDLRNEKIGFKIRQHTLYRIPYILVCGDKEVESNQIAVRTHSGKDLGSFSVNVFADKLLEEISSRCLH</sequence>
<keyword id="KW-0030">Aminoacyl-tRNA synthetase</keyword>
<keyword id="KW-0067">ATP-binding</keyword>
<keyword id="KW-0963">Cytoplasm</keyword>
<keyword id="KW-0436">Ligase</keyword>
<keyword id="KW-0479">Metal-binding</keyword>
<keyword id="KW-0547">Nucleotide-binding</keyword>
<keyword id="KW-0648">Protein biosynthesis</keyword>
<keyword id="KW-0694">RNA-binding</keyword>
<keyword id="KW-0820">tRNA-binding</keyword>
<keyword id="KW-0862">Zinc</keyword>
<dbReference type="EC" id="6.1.1.3" evidence="1"/>
<dbReference type="EMBL" id="CP001277">
    <property type="protein sequence ID" value="ACQ68419.1"/>
    <property type="molecule type" value="Genomic_DNA"/>
</dbReference>
<dbReference type="RefSeq" id="WP_015874183.1">
    <property type="nucleotide sequence ID" value="NC_012751.1"/>
</dbReference>
<dbReference type="SMR" id="C4K776"/>
<dbReference type="STRING" id="572265.HDEF_1824"/>
<dbReference type="GeneID" id="66261411"/>
<dbReference type="KEGG" id="hde:HDEF_1824"/>
<dbReference type="eggNOG" id="COG0441">
    <property type="taxonomic scope" value="Bacteria"/>
</dbReference>
<dbReference type="HOGENOM" id="CLU_008554_0_1_6"/>
<dbReference type="Proteomes" id="UP000002334">
    <property type="component" value="Chromosome"/>
</dbReference>
<dbReference type="GO" id="GO:0005829">
    <property type="term" value="C:cytosol"/>
    <property type="evidence" value="ECO:0007669"/>
    <property type="project" value="TreeGrafter"/>
</dbReference>
<dbReference type="GO" id="GO:0005524">
    <property type="term" value="F:ATP binding"/>
    <property type="evidence" value="ECO:0007669"/>
    <property type="project" value="UniProtKB-UniRule"/>
</dbReference>
<dbReference type="GO" id="GO:0046872">
    <property type="term" value="F:metal ion binding"/>
    <property type="evidence" value="ECO:0007669"/>
    <property type="project" value="UniProtKB-KW"/>
</dbReference>
<dbReference type="GO" id="GO:0004829">
    <property type="term" value="F:threonine-tRNA ligase activity"/>
    <property type="evidence" value="ECO:0007669"/>
    <property type="project" value="UniProtKB-UniRule"/>
</dbReference>
<dbReference type="GO" id="GO:0000049">
    <property type="term" value="F:tRNA binding"/>
    <property type="evidence" value="ECO:0007669"/>
    <property type="project" value="UniProtKB-KW"/>
</dbReference>
<dbReference type="GO" id="GO:0006435">
    <property type="term" value="P:threonyl-tRNA aminoacylation"/>
    <property type="evidence" value="ECO:0007669"/>
    <property type="project" value="UniProtKB-UniRule"/>
</dbReference>
<dbReference type="CDD" id="cd01667">
    <property type="entry name" value="TGS_ThrRS"/>
    <property type="match status" value="1"/>
</dbReference>
<dbReference type="CDD" id="cd00860">
    <property type="entry name" value="ThrRS_anticodon"/>
    <property type="match status" value="1"/>
</dbReference>
<dbReference type="CDD" id="cd00771">
    <property type="entry name" value="ThrRS_core"/>
    <property type="match status" value="1"/>
</dbReference>
<dbReference type="FunFam" id="3.10.20.30:FF:000005">
    <property type="entry name" value="Threonine--tRNA ligase"/>
    <property type="match status" value="1"/>
</dbReference>
<dbReference type="FunFam" id="3.30.54.20:FF:000002">
    <property type="entry name" value="Threonine--tRNA ligase"/>
    <property type="match status" value="1"/>
</dbReference>
<dbReference type="FunFam" id="3.30.930.10:FF:000002">
    <property type="entry name" value="Threonine--tRNA ligase"/>
    <property type="match status" value="1"/>
</dbReference>
<dbReference type="FunFam" id="3.40.50.800:FF:000001">
    <property type="entry name" value="Threonine--tRNA ligase"/>
    <property type="match status" value="1"/>
</dbReference>
<dbReference type="FunFam" id="3.30.980.10:FF:000005">
    <property type="entry name" value="Threonyl-tRNA synthetase, mitochondrial"/>
    <property type="match status" value="1"/>
</dbReference>
<dbReference type="Gene3D" id="3.10.20.30">
    <property type="match status" value="1"/>
</dbReference>
<dbReference type="Gene3D" id="3.30.54.20">
    <property type="match status" value="1"/>
</dbReference>
<dbReference type="Gene3D" id="3.40.50.800">
    <property type="entry name" value="Anticodon-binding domain"/>
    <property type="match status" value="1"/>
</dbReference>
<dbReference type="Gene3D" id="3.30.930.10">
    <property type="entry name" value="Bira Bifunctional Protein, Domain 2"/>
    <property type="match status" value="1"/>
</dbReference>
<dbReference type="Gene3D" id="3.30.980.10">
    <property type="entry name" value="Threonyl-trna Synthetase, Chain A, domain 2"/>
    <property type="match status" value="1"/>
</dbReference>
<dbReference type="HAMAP" id="MF_00184">
    <property type="entry name" value="Thr_tRNA_synth"/>
    <property type="match status" value="1"/>
</dbReference>
<dbReference type="InterPro" id="IPR002314">
    <property type="entry name" value="aa-tRNA-synt_IIb"/>
</dbReference>
<dbReference type="InterPro" id="IPR006195">
    <property type="entry name" value="aa-tRNA-synth_II"/>
</dbReference>
<dbReference type="InterPro" id="IPR045864">
    <property type="entry name" value="aa-tRNA-synth_II/BPL/LPL"/>
</dbReference>
<dbReference type="InterPro" id="IPR004154">
    <property type="entry name" value="Anticodon-bd"/>
</dbReference>
<dbReference type="InterPro" id="IPR036621">
    <property type="entry name" value="Anticodon-bd_dom_sf"/>
</dbReference>
<dbReference type="InterPro" id="IPR012675">
    <property type="entry name" value="Beta-grasp_dom_sf"/>
</dbReference>
<dbReference type="InterPro" id="IPR004095">
    <property type="entry name" value="TGS"/>
</dbReference>
<dbReference type="InterPro" id="IPR012676">
    <property type="entry name" value="TGS-like"/>
</dbReference>
<dbReference type="InterPro" id="IPR002320">
    <property type="entry name" value="Thr-tRNA-ligase_IIa"/>
</dbReference>
<dbReference type="InterPro" id="IPR018163">
    <property type="entry name" value="Thr/Ala-tRNA-synth_IIc_edit"/>
</dbReference>
<dbReference type="InterPro" id="IPR047246">
    <property type="entry name" value="ThrRS_anticodon"/>
</dbReference>
<dbReference type="InterPro" id="IPR033728">
    <property type="entry name" value="ThrRS_core"/>
</dbReference>
<dbReference type="InterPro" id="IPR012947">
    <property type="entry name" value="tRNA_SAD"/>
</dbReference>
<dbReference type="NCBIfam" id="TIGR00418">
    <property type="entry name" value="thrS"/>
    <property type="match status" value="1"/>
</dbReference>
<dbReference type="PANTHER" id="PTHR11451:SF44">
    <property type="entry name" value="THREONINE--TRNA LIGASE, CHLOROPLASTIC_MITOCHONDRIAL 2"/>
    <property type="match status" value="1"/>
</dbReference>
<dbReference type="PANTHER" id="PTHR11451">
    <property type="entry name" value="THREONINE-TRNA LIGASE"/>
    <property type="match status" value="1"/>
</dbReference>
<dbReference type="Pfam" id="PF03129">
    <property type="entry name" value="HGTP_anticodon"/>
    <property type="match status" value="1"/>
</dbReference>
<dbReference type="Pfam" id="PF02824">
    <property type="entry name" value="TGS"/>
    <property type="match status" value="1"/>
</dbReference>
<dbReference type="Pfam" id="PF00587">
    <property type="entry name" value="tRNA-synt_2b"/>
    <property type="match status" value="1"/>
</dbReference>
<dbReference type="Pfam" id="PF07973">
    <property type="entry name" value="tRNA_SAD"/>
    <property type="match status" value="1"/>
</dbReference>
<dbReference type="PRINTS" id="PR01047">
    <property type="entry name" value="TRNASYNTHTHR"/>
</dbReference>
<dbReference type="SMART" id="SM00863">
    <property type="entry name" value="tRNA_SAD"/>
    <property type="match status" value="1"/>
</dbReference>
<dbReference type="SUPFAM" id="SSF52954">
    <property type="entry name" value="Class II aaRS ABD-related"/>
    <property type="match status" value="1"/>
</dbReference>
<dbReference type="SUPFAM" id="SSF55681">
    <property type="entry name" value="Class II aaRS and biotin synthetases"/>
    <property type="match status" value="1"/>
</dbReference>
<dbReference type="SUPFAM" id="SSF81271">
    <property type="entry name" value="TGS-like"/>
    <property type="match status" value="1"/>
</dbReference>
<dbReference type="SUPFAM" id="SSF55186">
    <property type="entry name" value="ThrRS/AlaRS common domain"/>
    <property type="match status" value="1"/>
</dbReference>
<dbReference type="PROSITE" id="PS50862">
    <property type="entry name" value="AA_TRNA_LIGASE_II"/>
    <property type="match status" value="1"/>
</dbReference>
<dbReference type="PROSITE" id="PS51880">
    <property type="entry name" value="TGS"/>
    <property type="match status" value="1"/>
</dbReference>
<accession>C4K776</accession>
<comment type="function">
    <text evidence="1">Catalyzes the attachment of threonine to tRNA(Thr) in a two-step reaction: L-threonine is first activated by ATP to form Thr-AMP and then transferred to the acceptor end of tRNA(Thr). Also edits incorrectly charged L-seryl-tRNA(Thr).</text>
</comment>
<comment type="catalytic activity">
    <reaction evidence="1">
        <text>tRNA(Thr) + L-threonine + ATP = L-threonyl-tRNA(Thr) + AMP + diphosphate + H(+)</text>
        <dbReference type="Rhea" id="RHEA:24624"/>
        <dbReference type="Rhea" id="RHEA-COMP:9670"/>
        <dbReference type="Rhea" id="RHEA-COMP:9704"/>
        <dbReference type="ChEBI" id="CHEBI:15378"/>
        <dbReference type="ChEBI" id="CHEBI:30616"/>
        <dbReference type="ChEBI" id="CHEBI:33019"/>
        <dbReference type="ChEBI" id="CHEBI:57926"/>
        <dbReference type="ChEBI" id="CHEBI:78442"/>
        <dbReference type="ChEBI" id="CHEBI:78534"/>
        <dbReference type="ChEBI" id="CHEBI:456215"/>
        <dbReference type="EC" id="6.1.1.3"/>
    </reaction>
</comment>
<comment type="cofactor">
    <cofactor evidence="1">
        <name>Zn(2+)</name>
        <dbReference type="ChEBI" id="CHEBI:29105"/>
    </cofactor>
    <text evidence="1">Binds 1 zinc ion per subunit.</text>
</comment>
<comment type="subunit">
    <text evidence="1">Homodimer.</text>
</comment>
<comment type="subcellular location">
    <subcellularLocation>
        <location evidence="1">Cytoplasm</location>
    </subcellularLocation>
</comment>
<comment type="similarity">
    <text evidence="1">Belongs to the class-II aminoacyl-tRNA synthetase family.</text>
</comment>
<name>SYT_HAMD5</name>
<proteinExistence type="inferred from homology"/>